<protein>
    <recommendedName>
        <fullName evidence="1">UPF0210 protein Ldb1026</fullName>
    </recommendedName>
</protein>
<name>Y1026_LACDA</name>
<keyword id="KW-1185">Reference proteome</keyword>
<evidence type="ECO:0000255" key="1">
    <source>
        <dbReference type="HAMAP-Rule" id="MF_01221"/>
    </source>
</evidence>
<accession>Q1GA88</accession>
<organism>
    <name type="scientific">Lactobacillus delbrueckii subsp. bulgaricus (strain ATCC 11842 / DSM 20081 / BCRC 10696 / JCM 1002 / NBRC 13953 / NCIMB 11778 / NCTC 12712 / WDCM 00102 / Lb 14)</name>
    <dbReference type="NCBI Taxonomy" id="390333"/>
    <lineage>
        <taxon>Bacteria</taxon>
        <taxon>Bacillati</taxon>
        <taxon>Bacillota</taxon>
        <taxon>Bacilli</taxon>
        <taxon>Lactobacillales</taxon>
        <taxon>Lactobacillaceae</taxon>
        <taxon>Lactobacillus</taxon>
    </lineage>
</organism>
<proteinExistence type="inferred from homology"/>
<sequence>MDLRRIMETVNMIDNENLDLRTTTMGISLLDCIDSDSDRACQKIYDKITTKAENLVKVARELETEYGIPIANKRITVTPISLIAAASGDSDYVKYAVTLDKAAKAVGVDLIGGFSALVHKGYQNGDRVLIKSIPQALKETERVCSSVNVGSTRSGINMDAVKEMGQIVIENEKINPLNNGNLVIFCNAVEDNPFMAGGFHGVGESDVALNVGVSGPGVVKTALEKVKGESMDVVAETIKQTAFKVTRMGQLVGQEASKRLGVDFGIVDLSLAPTPAQGDSVANILEEIGLESVGTHGTTAALAMLNDAVKKGGIMACSHVGGLSGAFIPESEDAGMIAAAEKGILTVDKLEAMTAVCSVGLDMIAVPGDTPAETISAMIADEAAIGMINNKTTAVRVIPVPGKEVGDSIEFGGLFGYAPIMPVHKESSAAMINRGGRIPAPVHSFKN</sequence>
<gene>
    <name type="ordered locus">Ldb1026</name>
</gene>
<feature type="chain" id="PRO_1000066753" description="UPF0210 protein Ldb1026">
    <location>
        <begin position="1"/>
        <end position="447"/>
    </location>
</feature>
<reference key="1">
    <citation type="journal article" date="2006" name="Proc. Natl. Acad. Sci. U.S.A.">
        <title>The complete genome sequence of Lactobacillus bulgaricus reveals extensive and ongoing reductive evolution.</title>
        <authorList>
            <person name="van de Guchte M."/>
            <person name="Penaud S."/>
            <person name="Grimaldi C."/>
            <person name="Barbe V."/>
            <person name="Bryson K."/>
            <person name="Nicolas P."/>
            <person name="Robert C."/>
            <person name="Oztas S."/>
            <person name="Mangenot S."/>
            <person name="Couloux A."/>
            <person name="Loux V."/>
            <person name="Dervyn R."/>
            <person name="Bossy R."/>
            <person name="Bolotin A."/>
            <person name="Batto J.-M."/>
            <person name="Walunas T."/>
            <person name="Gibrat J.-F."/>
            <person name="Bessieres P."/>
            <person name="Weissenbach J."/>
            <person name="Ehrlich S.D."/>
            <person name="Maguin E."/>
        </authorList>
    </citation>
    <scope>NUCLEOTIDE SEQUENCE [LARGE SCALE GENOMIC DNA]</scope>
    <source>
        <strain>ATCC 11842 / DSM 20081 / BCRC 10696 / JCM 1002 / NBRC 13953 / NCIMB 11778 / NCTC 12712 / WDCM 00102 / Lb 14</strain>
    </source>
</reference>
<comment type="subunit">
    <text evidence="1">Homodimer.</text>
</comment>
<comment type="similarity">
    <text evidence="1">Belongs to the UPF0210 family.</text>
</comment>
<dbReference type="EMBL" id="CR954253">
    <property type="protein sequence ID" value="CAI97828.1"/>
    <property type="molecule type" value="Genomic_DNA"/>
</dbReference>
<dbReference type="RefSeq" id="WP_011543879.1">
    <property type="nucleotide sequence ID" value="NC_008054.1"/>
</dbReference>
<dbReference type="SMR" id="Q1GA88"/>
<dbReference type="STRING" id="390333.Ldb1026"/>
<dbReference type="KEGG" id="ldb:Ldb1026"/>
<dbReference type="PATRIC" id="fig|390333.13.peg.663"/>
<dbReference type="eggNOG" id="COG2848">
    <property type="taxonomic scope" value="Bacteria"/>
</dbReference>
<dbReference type="HOGENOM" id="CLU_048704_0_0_9"/>
<dbReference type="BioCyc" id="LDEL390333:LDB_RS04500-MONOMER"/>
<dbReference type="Proteomes" id="UP000001259">
    <property type="component" value="Chromosome"/>
</dbReference>
<dbReference type="CDD" id="cd08025">
    <property type="entry name" value="RNR_PFL_like_DUF711"/>
    <property type="match status" value="1"/>
</dbReference>
<dbReference type="Gene3D" id="3.20.70.20">
    <property type="match status" value="1"/>
</dbReference>
<dbReference type="HAMAP" id="MF_01221">
    <property type="entry name" value="UPF0210"/>
    <property type="match status" value="1"/>
</dbReference>
<dbReference type="InterPro" id="IPR007841">
    <property type="entry name" value="UPF0210"/>
</dbReference>
<dbReference type="NCBIfam" id="NF003700">
    <property type="entry name" value="PRK05313.1"/>
    <property type="match status" value="1"/>
</dbReference>
<dbReference type="PANTHER" id="PTHR37560:SF1">
    <property type="entry name" value="UPF0210 PROTEIN MJ1665"/>
    <property type="match status" value="1"/>
</dbReference>
<dbReference type="PANTHER" id="PTHR37560">
    <property type="entry name" value="UPF0210 PROTEIN SPR0218"/>
    <property type="match status" value="1"/>
</dbReference>
<dbReference type="Pfam" id="PF05167">
    <property type="entry name" value="DUF711"/>
    <property type="match status" value="1"/>
</dbReference>
<dbReference type="SUPFAM" id="SSF51998">
    <property type="entry name" value="PFL-like glycyl radical enzymes"/>
    <property type="match status" value="1"/>
</dbReference>